<feature type="chain" id="PRO_1000015401" description="Large-conductance mechanosensitive channel">
    <location>
        <begin position="1"/>
        <end position="139"/>
    </location>
</feature>
<feature type="transmembrane region" description="Helical" evidence="1">
    <location>
        <begin position="19"/>
        <end position="39"/>
    </location>
</feature>
<feature type="transmembrane region" description="Helical" evidence="1">
    <location>
        <begin position="81"/>
        <end position="101"/>
    </location>
</feature>
<keyword id="KW-0997">Cell inner membrane</keyword>
<keyword id="KW-1003">Cell membrane</keyword>
<keyword id="KW-0407">Ion channel</keyword>
<keyword id="KW-0406">Ion transport</keyword>
<keyword id="KW-0472">Membrane</keyword>
<keyword id="KW-1185">Reference proteome</keyword>
<keyword id="KW-0812">Transmembrane</keyword>
<keyword id="KW-1133">Transmembrane helix</keyword>
<keyword id="KW-0813">Transport</keyword>
<protein>
    <recommendedName>
        <fullName evidence="1">Large-conductance mechanosensitive channel</fullName>
    </recommendedName>
</protein>
<name>MSCL_NITHX</name>
<organism>
    <name type="scientific">Nitrobacter hamburgensis (strain DSM 10229 / NCIMB 13809 / X14)</name>
    <dbReference type="NCBI Taxonomy" id="323097"/>
    <lineage>
        <taxon>Bacteria</taxon>
        <taxon>Pseudomonadati</taxon>
        <taxon>Pseudomonadota</taxon>
        <taxon>Alphaproteobacteria</taxon>
        <taxon>Hyphomicrobiales</taxon>
        <taxon>Nitrobacteraceae</taxon>
        <taxon>Nitrobacter</taxon>
    </lineage>
</organism>
<evidence type="ECO:0000255" key="1">
    <source>
        <dbReference type="HAMAP-Rule" id="MF_00115"/>
    </source>
</evidence>
<gene>
    <name evidence="1" type="primary">mscL</name>
    <name type="ordered locus">Nham_2261</name>
</gene>
<dbReference type="EMBL" id="CP000319">
    <property type="protein sequence ID" value="ABE63053.1"/>
    <property type="molecule type" value="Genomic_DNA"/>
</dbReference>
<dbReference type="RefSeq" id="WP_011510730.1">
    <property type="nucleotide sequence ID" value="NC_007964.1"/>
</dbReference>
<dbReference type="SMR" id="Q1QL44"/>
<dbReference type="STRING" id="323097.Nham_2261"/>
<dbReference type="KEGG" id="nha:Nham_2261"/>
<dbReference type="eggNOG" id="COG1970">
    <property type="taxonomic scope" value="Bacteria"/>
</dbReference>
<dbReference type="HOGENOM" id="CLU_095787_0_1_5"/>
<dbReference type="OrthoDB" id="9810350at2"/>
<dbReference type="Proteomes" id="UP000001953">
    <property type="component" value="Chromosome"/>
</dbReference>
<dbReference type="GO" id="GO:0005886">
    <property type="term" value="C:plasma membrane"/>
    <property type="evidence" value="ECO:0007669"/>
    <property type="project" value="UniProtKB-SubCell"/>
</dbReference>
<dbReference type="GO" id="GO:0008381">
    <property type="term" value="F:mechanosensitive monoatomic ion channel activity"/>
    <property type="evidence" value="ECO:0007669"/>
    <property type="project" value="UniProtKB-UniRule"/>
</dbReference>
<dbReference type="FunFam" id="1.10.1200.120:FF:000001">
    <property type="entry name" value="Large-conductance mechanosensitive channel"/>
    <property type="match status" value="1"/>
</dbReference>
<dbReference type="Gene3D" id="1.10.1200.120">
    <property type="entry name" value="Large-conductance mechanosensitive channel, MscL, domain 1"/>
    <property type="match status" value="1"/>
</dbReference>
<dbReference type="HAMAP" id="MF_00115">
    <property type="entry name" value="MscL"/>
    <property type="match status" value="1"/>
</dbReference>
<dbReference type="InterPro" id="IPR019823">
    <property type="entry name" value="Mechanosensitive_channel_CS"/>
</dbReference>
<dbReference type="InterPro" id="IPR001185">
    <property type="entry name" value="MS_channel"/>
</dbReference>
<dbReference type="InterPro" id="IPR037673">
    <property type="entry name" value="MSC/AndL"/>
</dbReference>
<dbReference type="InterPro" id="IPR036019">
    <property type="entry name" value="MscL_channel"/>
</dbReference>
<dbReference type="NCBIfam" id="TIGR00220">
    <property type="entry name" value="mscL"/>
    <property type="match status" value="1"/>
</dbReference>
<dbReference type="NCBIfam" id="NF001843">
    <property type="entry name" value="PRK00567.1-4"/>
    <property type="match status" value="1"/>
</dbReference>
<dbReference type="NCBIfam" id="NF010557">
    <property type="entry name" value="PRK13952.1"/>
    <property type="match status" value="1"/>
</dbReference>
<dbReference type="PANTHER" id="PTHR30266:SF2">
    <property type="entry name" value="LARGE-CONDUCTANCE MECHANOSENSITIVE CHANNEL"/>
    <property type="match status" value="1"/>
</dbReference>
<dbReference type="PANTHER" id="PTHR30266">
    <property type="entry name" value="MECHANOSENSITIVE CHANNEL MSCL"/>
    <property type="match status" value="1"/>
</dbReference>
<dbReference type="Pfam" id="PF01741">
    <property type="entry name" value="MscL"/>
    <property type="match status" value="1"/>
</dbReference>
<dbReference type="PRINTS" id="PR01264">
    <property type="entry name" value="MECHCHANNEL"/>
</dbReference>
<dbReference type="SUPFAM" id="SSF81330">
    <property type="entry name" value="Gated mechanosensitive channel"/>
    <property type="match status" value="1"/>
</dbReference>
<dbReference type="PROSITE" id="PS01327">
    <property type="entry name" value="MSCL"/>
    <property type="match status" value="1"/>
</dbReference>
<proteinExistence type="inferred from homology"/>
<reference key="1">
    <citation type="submission" date="2006-03" db="EMBL/GenBank/DDBJ databases">
        <title>Complete sequence of chromosome of Nitrobacter hamburgensis X14.</title>
        <authorList>
            <consortium name="US DOE Joint Genome Institute"/>
            <person name="Copeland A."/>
            <person name="Lucas S."/>
            <person name="Lapidus A."/>
            <person name="Barry K."/>
            <person name="Detter J.C."/>
            <person name="Glavina del Rio T."/>
            <person name="Hammon N."/>
            <person name="Israni S."/>
            <person name="Dalin E."/>
            <person name="Tice H."/>
            <person name="Pitluck S."/>
            <person name="Chain P."/>
            <person name="Malfatti S."/>
            <person name="Shin M."/>
            <person name="Vergez L."/>
            <person name="Schmutz J."/>
            <person name="Larimer F."/>
            <person name="Land M."/>
            <person name="Hauser L."/>
            <person name="Kyrpides N."/>
            <person name="Ivanova N."/>
            <person name="Ward B."/>
            <person name="Arp D."/>
            <person name="Klotz M."/>
            <person name="Stein L."/>
            <person name="O'Mullan G."/>
            <person name="Starkenburg S."/>
            <person name="Sayavedra L."/>
            <person name="Poret-Peterson A.T."/>
            <person name="Gentry M.E."/>
            <person name="Bruce D."/>
            <person name="Richardson P."/>
        </authorList>
    </citation>
    <scope>NUCLEOTIDE SEQUENCE [LARGE SCALE GENOMIC DNA]</scope>
    <source>
        <strain>DSM 10229 / NCIMB 13809 / X14</strain>
    </source>
</reference>
<accession>Q1QL44</accession>
<sequence>MLKEFREFAMKGNVVDLAVAVIIGAAFGAIVSSMVADVIMPIIGAVTGGLDFSNYFTGLSKTVTATNLADAKKQGAVLAWGNFLTLTLNFLIVAFVLFMVVRFMSKLKRKDEAAPAAPPKPTREEELLTEIRDLLKTKK</sequence>
<comment type="function">
    <text evidence="1">Channel that opens in response to stretch forces in the membrane lipid bilayer. May participate in the regulation of osmotic pressure changes within the cell.</text>
</comment>
<comment type="subunit">
    <text evidence="1">Homopentamer.</text>
</comment>
<comment type="subcellular location">
    <subcellularLocation>
        <location evidence="1">Cell inner membrane</location>
        <topology evidence="1">Multi-pass membrane protein</topology>
    </subcellularLocation>
</comment>
<comment type="similarity">
    <text evidence="1">Belongs to the MscL family.</text>
</comment>